<feature type="chain" id="PRO_1000061442" description="Nucleotide-binding protein Tlet_0523">
    <location>
        <begin position="1"/>
        <end position="278"/>
    </location>
</feature>
<feature type="binding site" evidence="1">
    <location>
        <begin position="9"/>
        <end position="16"/>
    </location>
    <ligand>
        <name>ATP</name>
        <dbReference type="ChEBI" id="CHEBI:30616"/>
    </ligand>
</feature>
<feature type="binding site" evidence="1">
    <location>
        <begin position="58"/>
        <end position="61"/>
    </location>
    <ligand>
        <name>GTP</name>
        <dbReference type="ChEBI" id="CHEBI:37565"/>
    </ligand>
</feature>
<evidence type="ECO:0000255" key="1">
    <source>
        <dbReference type="HAMAP-Rule" id="MF_00636"/>
    </source>
</evidence>
<name>Y523_PSELT</name>
<accession>A8F4K6</accession>
<protein>
    <recommendedName>
        <fullName evidence="1">Nucleotide-binding protein Tlet_0523</fullName>
    </recommendedName>
</protein>
<comment type="function">
    <text evidence="1">Displays ATPase and GTPase activities.</text>
</comment>
<comment type="similarity">
    <text evidence="1">Belongs to the RapZ-like family.</text>
</comment>
<organism>
    <name type="scientific">Pseudothermotoga lettingae (strain ATCC BAA-301 / DSM 14385 / NBRC 107922 / TMO)</name>
    <name type="common">Thermotoga lettingae</name>
    <dbReference type="NCBI Taxonomy" id="416591"/>
    <lineage>
        <taxon>Bacteria</taxon>
        <taxon>Thermotogati</taxon>
        <taxon>Thermotogota</taxon>
        <taxon>Thermotogae</taxon>
        <taxon>Thermotogales</taxon>
        <taxon>Thermotogaceae</taxon>
        <taxon>Pseudothermotoga</taxon>
    </lineage>
</organism>
<reference key="1">
    <citation type="submission" date="2007-08" db="EMBL/GenBank/DDBJ databases">
        <title>Complete sequence of Thermotoga lettingae TMO.</title>
        <authorList>
            <consortium name="US DOE Joint Genome Institute"/>
            <person name="Copeland A."/>
            <person name="Lucas S."/>
            <person name="Lapidus A."/>
            <person name="Barry K."/>
            <person name="Glavina del Rio T."/>
            <person name="Dalin E."/>
            <person name="Tice H."/>
            <person name="Pitluck S."/>
            <person name="Foster B."/>
            <person name="Bruce D."/>
            <person name="Schmutz J."/>
            <person name="Larimer F."/>
            <person name="Land M."/>
            <person name="Hauser L."/>
            <person name="Kyrpides N."/>
            <person name="Mikhailova N."/>
            <person name="Nelson K."/>
            <person name="Gogarten J.P."/>
            <person name="Noll K."/>
            <person name="Richardson P."/>
        </authorList>
    </citation>
    <scope>NUCLEOTIDE SEQUENCE [LARGE SCALE GENOMIC DNA]</scope>
    <source>
        <strain>ATCC BAA-301 / DSM 14385 / NBRC 107922 / TMO</strain>
    </source>
</reference>
<keyword id="KW-0067">ATP-binding</keyword>
<keyword id="KW-0342">GTP-binding</keyword>
<keyword id="KW-0547">Nucleotide-binding</keyword>
<keyword id="KW-1185">Reference proteome</keyword>
<dbReference type="EMBL" id="CP000812">
    <property type="protein sequence ID" value="ABV33090.1"/>
    <property type="molecule type" value="Genomic_DNA"/>
</dbReference>
<dbReference type="SMR" id="A8F4K6"/>
<dbReference type="STRING" id="416591.Tlet_0523"/>
<dbReference type="KEGG" id="tle:Tlet_0523"/>
<dbReference type="eggNOG" id="COG1660">
    <property type="taxonomic scope" value="Bacteria"/>
</dbReference>
<dbReference type="HOGENOM" id="CLU_059558_0_0_0"/>
<dbReference type="OrthoDB" id="9784461at2"/>
<dbReference type="Proteomes" id="UP000002016">
    <property type="component" value="Chromosome"/>
</dbReference>
<dbReference type="GO" id="GO:0005524">
    <property type="term" value="F:ATP binding"/>
    <property type="evidence" value="ECO:0007669"/>
    <property type="project" value="UniProtKB-UniRule"/>
</dbReference>
<dbReference type="GO" id="GO:0005525">
    <property type="term" value="F:GTP binding"/>
    <property type="evidence" value="ECO:0007669"/>
    <property type="project" value="UniProtKB-UniRule"/>
</dbReference>
<dbReference type="Gene3D" id="3.40.50.300">
    <property type="entry name" value="P-loop containing nucleotide triphosphate hydrolases"/>
    <property type="match status" value="1"/>
</dbReference>
<dbReference type="HAMAP" id="MF_00636">
    <property type="entry name" value="RapZ_like"/>
    <property type="match status" value="1"/>
</dbReference>
<dbReference type="InterPro" id="IPR027417">
    <property type="entry name" value="P-loop_NTPase"/>
</dbReference>
<dbReference type="InterPro" id="IPR005337">
    <property type="entry name" value="RapZ-like"/>
</dbReference>
<dbReference type="InterPro" id="IPR053930">
    <property type="entry name" value="RapZ-like_N"/>
</dbReference>
<dbReference type="InterPro" id="IPR053931">
    <property type="entry name" value="RapZ_C"/>
</dbReference>
<dbReference type="NCBIfam" id="NF003828">
    <property type="entry name" value="PRK05416.1"/>
    <property type="match status" value="1"/>
</dbReference>
<dbReference type="PANTHER" id="PTHR30448">
    <property type="entry name" value="RNASE ADAPTER PROTEIN RAPZ"/>
    <property type="match status" value="1"/>
</dbReference>
<dbReference type="PANTHER" id="PTHR30448:SF0">
    <property type="entry name" value="RNASE ADAPTER PROTEIN RAPZ"/>
    <property type="match status" value="1"/>
</dbReference>
<dbReference type="Pfam" id="PF22740">
    <property type="entry name" value="PapZ_C"/>
    <property type="match status" value="1"/>
</dbReference>
<dbReference type="Pfam" id="PF03668">
    <property type="entry name" value="RapZ-like_N"/>
    <property type="match status" value="1"/>
</dbReference>
<dbReference type="PIRSF" id="PIRSF005052">
    <property type="entry name" value="P-loopkin"/>
    <property type="match status" value="1"/>
</dbReference>
<dbReference type="PRINTS" id="PR01100">
    <property type="entry name" value="SHIKIMTKNASE"/>
</dbReference>
<dbReference type="SUPFAM" id="SSF52540">
    <property type="entry name" value="P-loop containing nucleoside triphosphate hydrolases"/>
    <property type="match status" value="1"/>
</dbReference>
<sequence length="278" mass="31609">MKRILVVSGLSGAGKSTVARVLEDIGFFCIDNLPPALLNDFMVLLSSSSIDKVALVVDIRSAQLGNAVQAIKKLVDNYSNIVTVLFLEASDEELLKRFATTRRRHPLEGQLSLQEAISKEKELLRDMKEMSVVIDTTGLDIHTLREKIGSLLKEEAQFVIRIRSFGFKYGLPADTDFIIDTRFLPNPYYDRKLAQLNGTDQEIVNFFSKYPVVEDFIQYTYKLLHIAATRYKSEGRPFMTVSIGCTGGRHRSVYVAEKLSKILKDRFYVYVEHRDVNK</sequence>
<gene>
    <name type="ordered locus">Tlet_0523</name>
</gene>
<proteinExistence type="inferred from homology"/>